<proteinExistence type="inferred from homology"/>
<name>THIO_STAA3</name>
<evidence type="ECO:0000250" key="1"/>
<evidence type="ECO:0000255" key="2">
    <source>
        <dbReference type="PROSITE-ProRule" id="PRU00691"/>
    </source>
</evidence>
<evidence type="ECO:0000305" key="3"/>
<accession>Q2FHT6</accession>
<sequence>MAIVKVTDADFDSKVESGVQLVDFWATWCGPCKMIAPVLEELAADYEGKADILKLDVDENPSTAAKYEVMSIPTLIVFKDGQPVDKVVGFQPKENLAEVLDKHL</sequence>
<protein>
    <recommendedName>
        <fullName>Thioredoxin</fullName>
        <shortName>Trx</shortName>
    </recommendedName>
</protein>
<organism>
    <name type="scientific">Staphylococcus aureus (strain USA300)</name>
    <dbReference type="NCBI Taxonomy" id="367830"/>
    <lineage>
        <taxon>Bacteria</taxon>
        <taxon>Bacillati</taxon>
        <taxon>Bacillota</taxon>
        <taxon>Bacilli</taxon>
        <taxon>Bacillales</taxon>
        <taxon>Staphylococcaceae</taxon>
        <taxon>Staphylococcus</taxon>
    </lineage>
</organism>
<comment type="function">
    <text evidence="1">Component of the thioredoxin-thioredoxin reductase system. Participates in various redox reactions through the reversible oxidation of its active center dithiol to a disulfide and catalyzes dithiol-disulfide exchange reactions (By similarity).</text>
</comment>
<comment type="similarity">
    <text evidence="3">Belongs to the thioredoxin family.</text>
</comment>
<gene>
    <name type="primary">trxA</name>
    <name type="ordered locus">SAUSA300_1044</name>
</gene>
<keyword id="KW-1015">Disulfide bond</keyword>
<keyword id="KW-0249">Electron transport</keyword>
<keyword id="KW-0676">Redox-active center</keyword>
<keyword id="KW-0813">Transport</keyword>
<dbReference type="EMBL" id="CP000255">
    <property type="protein sequence ID" value="ABD21724.1"/>
    <property type="molecule type" value="Genomic_DNA"/>
</dbReference>
<dbReference type="RefSeq" id="WP_001018928.1">
    <property type="nucleotide sequence ID" value="NZ_CP027476.1"/>
</dbReference>
<dbReference type="SMR" id="Q2FHT6"/>
<dbReference type="GeneID" id="98345462"/>
<dbReference type="KEGG" id="saa:SAUSA300_1044"/>
<dbReference type="HOGENOM" id="CLU_090389_10_2_9"/>
<dbReference type="OMA" id="HIHYVTD"/>
<dbReference type="Proteomes" id="UP000001939">
    <property type="component" value="Chromosome"/>
</dbReference>
<dbReference type="GO" id="GO:0005829">
    <property type="term" value="C:cytosol"/>
    <property type="evidence" value="ECO:0007669"/>
    <property type="project" value="TreeGrafter"/>
</dbReference>
<dbReference type="GO" id="GO:0015035">
    <property type="term" value="F:protein-disulfide reductase activity"/>
    <property type="evidence" value="ECO:0007669"/>
    <property type="project" value="InterPro"/>
</dbReference>
<dbReference type="GO" id="GO:0045454">
    <property type="term" value="P:cell redox homeostasis"/>
    <property type="evidence" value="ECO:0007669"/>
    <property type="project" value="TreeGrafter"/>
</dbReference>
<dbReference type="CDD" id="cd02947">
    <property type="entry name" value="TRX_family"/>
    <property type="match status" value="1"/>
</dbReference>
<dbReference type="FunFam" id="3.40.30.10:FF:000001">
    <property type="entry name" value="Thioredoxin"/>
    <property type="match status" value="1"/>
</dbReference>
<dbReference type="Gene3D" id="3.40.30.10">
    <property type="entry name" value="Glutaredoxin"/>
    <property type="match status" value="1"/>
</dbReference>
<dbReference type="InterPro" id="IPR005746">
    <property type="entry name" value="Thioredoxin"/>
</dbReference>
<dbReference type="InterPro" id="IPR036249">
    <property type="entry name" value="Thioredoxin-like_sf"/>
</dbReference>
<dbReference type="InterPro" id="IPR017937">
    <property type="entry name" value="Thioredoxin_CS"/>
</dbReference>
<dbReference type="InterPro" id="IPR013766">
    <property type="entry name" value="Thioredoxin_domain"/>
</dbReference>
<dbReference type="NCBIfam" id="TIGR01068">
    <property type="entry name" value="thioredoxin"/>
    <property type="match status" value="1"/>
</dbReference>
<dbReference type="PANTHER" id="PTHR45663">
    <property type="entry name" value="GEO12009P1"/>
    <property type="match status" value="1"/>
</dbReference>
<dbReference type="PANTHER" id="PTHR45663:SF11">
    <property type="entry name" value="GEO12009P1"/>
    <property type="match status" value="1"/>
</dbReference>
<dbReference type="Pfam" id="PF00085">
    <property type="entry name" value="Thioredoxin"/>
    <property type="match status" value="1"/>
</dbReference>
<dbReference type="PIRSF" id="PIRSF000077">
    <property type="entry name" value="Thioredoxin"/>
    <property type="match status" value="1"/>
</dbReference>
<dbReference type="PRINTS" id="PR00421">
    <property type="entry name" value="THIOREDOXIN"/>
</dbReference>
<dbReference type="SUPFAM" id="SSF52833">
    <property type="entry name" value="Thioredoxin-like"/>
    <property type="match status" value="1"/>
</dbReference>
<dbReference type="PROSITE" id="PS00194">
    <property type="entry name" value="THIOREDOXIN_1"/>
    <property type="match status" value="1"/>
</dbReference>
<dbReference type="PROSITE" id="PS51352">
    <property type="entry name" value="THIOREDOXIN_2"/>
    <property type="match status" value="1"/>
</dbReference>
<reference key="1">
    <citation type="journal article" date="2006" name="Lancet">
        <title>Complete genome sequence of USA300, an epidemic clone of community-acquired meticillin-resistant Staphylococcus aureus.</title>
        <authorList>
            <person name="Diep B.A."/>
            <person name="Gill S.R."/>
            <person name="Chang R.F."/>
            <person name="Phan T.H."/>
            <person name="Chen J.H."/>
            <person name="Davidson M.G."/>
            <person name="Lin F."/>
            <person name="Lin J."/>
            <person name="Carleton H.A."/>
            <person name="Mongodin E.F."/>
            <person name="Sensabaugh G.F."/>
            <person name="Perdreau-Remington F."/>
        </authorList>
    </citation>
    <scope>NUCLEOTIDE SEQUENCE [LARGE SCALE GENOMIC DNA]</scope>
    <source>
        <strain>USA300</strain>
    </source>
</reference>
<feature type="chain" id="PRO_0000267206" description="Thioredoxin">
    <location>
        <begin position="1"/>
        <end position="104"/>
    </location>
</feature>
<feature type="domain" description="Thioredoxin" evidence="2">
    <location>
        <begin position="2"/>
        <end position="104"/>
    </location>
</feature>
<feature type="disulfide bond" description="Redox-active" evidence="2">
    <location>
        <begin position="29"/>
        <end position="32"/>
    </location>
</feature>